<name>SSTT_ACIBY</name>
<dbReference type="EMBL" id="CU459141">
    <property type="protein sequence ID" value="CAM86971.1"/>
    <property type="molecule type" value="Genomic_DNA"/>
</dbReference>
<dbReference type="RefSeq" id="WP_000889009.1">
    <property type="nucleotide sequence ID" value="NZ_JBDGFB010000001.1"/>
</dbReference>
<dbReference type="SMR" id="B0VCY6"/>
<dbReference type="EnsemblBacteria" id="CAM86971">
    <property type="protein sequence ID" value="CAM86971"/>
    <property type="gene ID" value="ABAYE2097"/>
</dbReference>
<dbReference type="KEGG" id="aby:ABAYE2097"/>
<dbReference type="HOGENOM" id="CLU_044581_0_0_6"/>
<dbReference type="GO" id="GO:0005886">
    <property type="term" value="C:plasma membrane"/>
    <property type="evidence" value="ECO:0007669"/>
    <property type="project" value="UniProtKB-SubCell"/>
</dbReference>
<dbReference type="GO" id="GO:0015171">
    <property type="term" value="F:amino acid transmembrane transporter activity"/>
    <property type="evidence" value="ECO:0007669"/>
    <property type="project" value="UniProtKB-UniRule"/>
</dbReference>
<dbReference type="GO" id="GO:0015293">
    <property type="term" value="F:symporter activity"/>
    <property type="evidence" value="ECO:0007669"/>
    <property type="project" value="UniProtKB-UniRule"/>
</dbReference>
<dbReference type="GO" id="GO:0032329">
    <property type="term" value="P:serine transport"/>
    <property type="evidence" value="ECO:0007669"/>
    <property type="project" value="InterPro"/>
</dbReference>
<dbReference type="GO" id="GO:0015826">
    <property type="term" value="P:threonine transport"/>
    <property type="evidence" value="ECO:0007669"/>
    <property type="project" value="InterPro"/>
</dbReference>
<dbReference type="FunFam" id="1.10.3860.10:FF:000003">
    <property type="entry name" value="Serine/threonine transporter sstT"/>
    <property type="match status" value="1"/>
</dbReference>
<dbReference type="Gene3D" id="1.10.3860.10">
    <property type="entry name" value="Sodium:dicarboxylate symporter"/>
    <property type="match status" value="1"/>
</dbReference>
<dbReference type="HAMAP" id="MF_01582">
    <property type="entry name" value="Ser_Thr_transp_SstT"/>
    <property type="match status" value="1"/>
</dbReference>
<dbReference type="InterPro" id="IPR001991">
    <property type="entry name" value="Na-dicarboxylate_symporter"/>
</dbReference>
<dbReference type="InterPro" id="IPR036458">
    <property type="entry name" value="Na:dicarbo_symporter_sf"/>
</dbReference>
<dbReference type="InterPro" id="IPR023025">
    <property type="entry name" value="Ser_Thr_transp_SstT"/>
</dbReference>
<dbReference type="NCBIfam" id="NF010151">
    <property type="entry name" value="PRK13628.1"/>
    <property type="match status" value="1"/>
</dbReference>
<dbReference type="PANTHER" id="PTHR42865">
    <property type="entry name" value="PROTON/GLUTAMATE-ASPARTATE SYMPORTER"/>
    <property type="match status" value="1"/>
</dbReference>
<dbReference type="PANTHER" id="PTHR42865:SF7">
    <property type="entry name" value="PROTON_GLUTAMATE-ASPARTATE SYMPORTER"/>
    <property type="match status" value="1"/>
</dbReference>
<dbReference type="Pfam" id="PF00375">
    <property type="entry name" value="SDF"/>
    <property type="match status" value="1"/>
</dbReference>
<dbReference type="PRINTS" id="PR00173">
    <property type="entry name" value="EDTRNSPORT"/>
</dbReference>
<dbReference type="SUPFAM" id="SSF118215">
    <property type="entry name" value="Proton glutamate symport protein"/>
    <property type="match status" value="1"/>
</dbReference>
<gene>
    <name evidence="1" type="primary">sstT</name>
    <name type="ordered locus">ABAYE2097</name>
</gene>
<protein>
    <recommendedName>
        <fullName evidence="1">Serine/threonine transporter SstT</fullName>
    </recommendedName>
    <alternativeName>
        <fullName evidence="1">Na(+)/serine-threonine symporter</fullName>
    </alternativeName>
</protein>
<reference key="1">
    <citation type="journal article" date="2008" name="PLoS ONE">
        <title>Comparative analysis of Acinetobacters: three genomes for three lifestyles.</title>
        <authorList>
            <person name="Vallenet D."/>
            <person name="Nordmann P."/>
            <person name="Barbe V."/>
            <person name="Poirel L."/>
            <person name="Mangenot S."/>
            <person name="Bataille E."/>
            <person name="Dossat C."/>
            <person name="Gas S."/>
            <person name="Kreimeyer A."/>
            <person name="Lenoble P."/>
            <person name="Oztas S."/>
            <person name="Poulain J."/>
            <person name="Segurens B."/>
            <person name="Robert C."/>
            <person name="Abergel C."/>
            <person name="Claverie J.-M."/>
            <person name="Raoult D."/>
            <person name="Medigue C."/>
            <person name="Weissenbach J."/>
            <person name="Cruveiller S."/>
        </authorList>
    </citation>
    <scope>NUCLEOTIDE SEQUENCE [LARGE SCALE GENOMIC DNA]</scope>
    <source>
        <strain>AYE</strain>
    </source>
</reference>
<accession>B0VCY6</accession>
<sequence length="400" mass="41621">MLEFFSRLSLVTKIIIAIILGIGVALLFPTVTPYLSLFGELFIKALKSVAPILVFVLVLSSIANFQVGHSANLRPVLLLYVVGMLLAAFSAVIASLSFPSTLYLNTVSHNNLQAPGSLADILKNLLLSFIANPVQAISEANFIGILAWAIGLGLAMRHSSDTTKQVMQDVSHAVSAIIHKVIAFAPVGIFGLVAVTFADAGLATLESYAQLLVVLLGTMLFVALVINPILVGLTIRGNPYPLVFKCLKESGITAFFTRSSAANIPVNLDLAERLGVNPSTASVSIPLGATVNMAGAAVTITVLTLATVHTLGIHVDLATMIILSVVATISACGASGVAGGSLLLIPVACSLFGISSEIAMQVVAVGMIISVLQDSTETALNSSTDVLFTAAVDIRSRQNS</sequence>
<evidence type="ECO:0000255" key="1">
    <source>
        <dbReference type="HAMAP-Rule" id="MF_01582"/>
    </source>
</evidence>
<comment type="function">
    <text evidence="1">Involved in the import of serine and threonine into the cell, with the concomitant import of sodium (symport system).</text>
</comment>
<comment type="catalytic activity">
    <reaction evidence="1">
        <text>L-serine(in) + Na(+)(in) = L-serine(out) + Na(+)(out)</text>
        <dbReference type="Rhea" id="RHEA:29575"/>
        <dbReference type="ChEBI" id="CHEBI:29101"/>
        <dbReference type="ChEBI" id="CHEBI:33384"/>
    </reaction>
    <physiologicalReaction direction="right-to-left" evidence="1">
        <dbReference type="Rhea" id="RHEA:29577"/>
    </physiologicalReaction>
</comment>
<comment type="catalytic activity">
    <reaction evidence="1">
        <text>L-threonine(in) + Na(+)(in) = L-threonine(out) + Na(+)(out)</text>
        <dbReference type="Rhea" id="RHEA:69999"/>
        <dbReference type="ChEBI" id="CHEBI:29101"/>
        <dbReference type="ChEBI" id="CHEBI:57926"/>
    </reaction>
    <physiologicalReaction direction="right-to-left" evidence="1">
        <dbReference type="Rhea" id="RHEA:70001"/>
    </physiologicalReaction>
</comment>
<comment type="subcellular location">
    <subcellularLocation>
        <location evidence="1">Cell inner membrane</location>
        <topology evidence="1">Multi-pass membrane protein</topology>
    </subcellularLocation>
</comment>
<comment type="similarity">
    <text evidence="1">Belongs to the dicarboxylate/amino acid:cation symporter (DAACS) (TC 2.A.23) family.</text>
</comment>
<organism>
    <name type="scientific">Acinetobacter baumannii (strain AYE)</name>
    <dbReference type="NCBI Taxonomy" id="509173"/>
    <lineage>
        <taxon>Bacteria</taxon>
        <taxon>Pseudomonadati</taxon>
        <taxon>Pseudomonadota</taxon>
        <taxon>Gammaproteobacteria</taxon>
        <taxon>Moraxellales</taxon>
        <taxon>Moraxellaceae</taxon>
        <taxon>Acinetobacter</taxon>
        <taxon>Acinetobacter calcoaceticus/baumannii complex</taxon>
    </lineage>
</organism>
<keyword id="KW-0029">Amino-acid transport</keyword>
<keyword id="KW-0997">Cell inner membrane</keyword>
<keyword id="KW-1003">Cell membrane</keyword>
<keyword id="KW-0472">Membrane</keyword>
<keyword id="KW-0769">Symport</keyword>
<keyword id="KW-0812">Transmembrane</keyword>
<keyword id="KW-1133">Transmembrane helix</keyword>
<keyword id="KW-0813">Transport</keyword>
<feature type="chain" id="PRO_1000197547" description="Serine/threonine transporter SstT">
    <location>
        <begin position="1"/>
        <end position="400"/>
    </location>
</feature>
<feature type="transmembrane region" description="Helical" evidence="1">
    <location>
        <begin position="14"/>
        <end position="34"/>
    </location>
</feature>
<feature type="transmembrane region" description="Helical" evidence="1">
    <location>
        <begin position="48"/>
        <end position="68"/>
    </location>
</feature>
<feature type="transmembrane region" description="Helical" evidence="1">
    <location>
        <begin position="76"/>
        <end position="96"/>
    </location>
</feature>
<feature type="transmembrane region" description="Helical" evidence="1">
    <location>
        <begin position="136"/>
        <end position="156"/>
    </location>
</feature>
<feature type="transmembrane region" description="Helical" evidence="1">
    <location>
        <begin position="177"/>
        <end position="197"/>
    </location>
</feature>
<feature type="transmembrane region" description="Helical" evidence="1">
    <location>
        <begin position="211"/>
        <end position="231"/>
    </location>
</feature>
<feature type="transmembrane region" description="Helical" evidence="1">
    <location>
        <begin position="285"/>
        <end position="305"/>
    </location>
</feature>
<feature type="transmembrane region" description="Helical" evidence="1">
    <location>
        <begin position="311"/>
        <end position="331"/>
    </location>
</feature>
<feature type="transmembrane region" description="Helical" evidence="1">
    <location>
        <begin position="349"/>
        <end position="371"/>
    </location>
</feature>
<proteinExistence type="inferred from homology"/>